<reference key="1">
    <citation type="submission" date="2004-03" db="EMBL/GenBank/DDBJ databases">
        <title>Isolation and analysis of SAMS gene in Chinese cabbage.</title>
        <authorList>
            <person name="Kim S.B."/>
            <person name="Kim S.H."/>
            <person name="Park Y.D."/>
        </authorList>
    </citation>
    <scope>NUCLEOTIDE SEQUENCE [MRNA]</scope>
    <source>
        <strain>cv. Seoul</strain>
    </source>
</reference>
<feature type="chain" id="PRO_0000363015" description="S-adenosylmethionine synthase">
    <location>
        <begin position="1"/>
        <end position="393"/>
    </location>
</feature>
<feature type="binding site" evidence="3">
    <location>
        <position position="9"/>
    </location>
    <ligand>
        <name>Mg(2+)</name>
        <dbReference type="ChEBI" id="CHEBI:18420"/>
    </ligand>
</feature>
<feature type="binding site" description="in other chain" evidence="4">
    <location>
        <position position="15"/>
    </location>
    <ligand>
        <name>ATP</name>
        <dbReference type="ChEBI" id="CHEBI:30616"/>
        <note>ligand shared between two neighboring subunits</note>
    </ligand>
</feature>
<feature type="binding site" evidence="2">
    <location>
        <position position="43"/>
    </location>
    <ligand>
        <name>K(+)</name>
        <dbReference type="ChEBI" id="CHEBI:29103"/>
    </ligand>
</feature>
<feature type="binding site" description="in other chain" evidence="2">
    <location>
        <position position="56"/>
    </location>
    <ligand>
        <name>L-methionine</name>
        <dbReference type="ChEBI" id="CHEBI:57844"/>
        <note>ligand shared between two neighboring subunits</note>
    </ligand>
</feature>
<feature type="binding site" description="in other chain" evidence="2">
    <location>
        <position position="99"/>
    </location>
    <ligand>
        <name>L-methionine</name>
        <dbReference type="ChEBI" id="CHEBI:57844"/>
        <note>ligand shared between two neighboring subunits</note>
    </ligand>
</feature>
<feature type="binding site" description="in other chain" evidence="4">
    <location>
        <begin position="167"/>
        <end position="169"/>
    </location>
    <ligand>
        <name>ATP</name>
        <dbReference type="ChEBI" id="CHEBI:30616"/>
        <note>ligand shared between two neighboring subunits</note>
    </ligand>
</feature>
<feature type="binding site" description="in other chain" evidence="4">
    <location>
        <begin position="235"/>
        <end position="238"/>
    </location>
    <ligand>
        <name>ATP</name>
        <dbReference type="ChEBI" id="CHEBI:30616"/>
        <note>ligand shared between two neighboring subunits</note>
    </ligand>
</feature>
<feature type="binding site" description="in other chain" evidence="4">
    <location>
        <position position="246"/>
    </location>
    <ligand>
        <name>ATP</name>
        <dbReference type="ChEBI" id="CHEBI:30616"/>
        <note>ligand shared between two neighboring subunits</note>
    </ligand>
</feature>
<feature type="binding site" evidence="2">
    <location>
        <position position="246"/>
    </location>
    <ligand>
        <name>L-methionine</name>
        <dbReference type="ChEBI" id="CHEBI:57844"/>
        <note>ligand shared between two neighboring subunits</note>
    </ligand>
</feature>
<feature type="binding site" description="in other chain" evidence="2">
    <location>
        <begin position="252"/>
        <end position="253"/>
    </location>
    <ligand>
        <name>ATP</name>
        <dbReference type="ChEBI" id="CHEBI:30616"/>
        <note>ligand shared between two neighboring subunits</note>
    </ligand>
</feature>
<feature type="binding site" evidence="2">
    <location>
        <position position="269"/>
    </location>
    <ligand>
        <name>ATP</name>
        <dbReference type="ChEBI" id="CHEBI:30616"/>
        <note>ligand shared between two neighboring subunits</note>
    </ligand>
</feature>
<feature type="binding site" evidence="2">
    <location>
        <position position="273"/>
    </location>
    <ligand>
        <name>ATP</name>
        <dbReference type="ChEBI" id="CHEBI:30616"/>
        <note>ligand shared between two neighboring subunits</note>
    </ligand>
</feature>
<feature type="binding site" evidence="3">
    <location>
        <position position="277"/>
    </location>
    <ligand>
        <name>ATP</name>
        <dbReference type="ChEBI" id="CHEBI:30616"/>
        <note>ligand shared between two neighboring subunits</note>
    </ligand>
</feature>
<feature type="binding site" description="in other chain" evidence="2">
    <location>
        <position position="277"/>
    </location>
    <ligand>
        <name>L-methionine</name>
        <dbReference type="ChEBI" id="CHEBI:57844"/>
        <note>ligand shared between two neighboring subunits</note>
    </ligand>
</feature>
<sequence>METFLFTSESVNEGHPDKLCDQISDAVLDACLEQDPDSKVACETCTKTNMVMVFGEITTKATVDYEKIVRDTCRSIGFISDDVGLDADKCKVLVNIEQQSPDIAQGVHGHFTKRPEDIGAGDQGHMFGYATDETPELMPLSHVLATKIGAKLTEVRKNGTCRWLRPDGKTQVTVEYYNDNGAMVPVRVHTVLISTQHDETVTNDEIARDLKEHVIKPIIPEKYLDDKTIFHLNPSGRFVIGGPHGDAGLTGRKIIIDTYGGWGAHGGGAFSGKDPTKVDRSGAYIVRQAAKSVVANGMARRALVQVSYAIGVPEPLSVFVDTYGTGLIPDKEILKIVKESFDFRPGMMTINLDLKRGGNGRFLKTAAYGHFGRDDPDFTWEVVKPLKWDKPQA</sequence>
<proteinExistence type="evidence at transcript level"/>
<comment type="function">
    <text evidence="5">Catalyzes the formation of S-adenosylmethionine from methionine and ATP. The reaction comprises two steps that are both catalyzed by the same enzyme: formation of S-adenosylmethionine (AdoMet) and triphosphate, and subsequent hydrolysis of the triphosphate.</text>
</comment>
<comment type="catalytic activity">
    <reaction evidence="5">
        <text>L-methionine + ATP + H2O = S-adenosyl-L-methionine + phosphate + diphosphate</text>
        <dbReference type="Rhea" id="RHEA:21080"/>
        <dbReference type="ChEBI" id="CHEBI:15377"/>
        <dbReference type="ChEBI" id="CHEBI:30616"/>
        <dbReference type="ChEBI" id="CHEBI:33019"/>
        <dbReference type="ChEBI" id="CHEBI:43474"/>
        <dbReference type="ChEBI" id="CHEBI:57844"/>
        <dbReference type="ChEBI" id="CHEBI:59789"/>
        <dbReference type="EC" id="2.5.1.6"/>
    </reaction>
</comment>
<comment type="cofactor">
    <cofactor evidence="5">
        <name>Mn(2+)</name>
        <dbReference type="ChEBI" id="CHEBI:29035"/>
    </cofactor>
    <cofactor evidence="5">
        <name>Mg(2+)</name>
        <dbReference type="ChEBI" id="CHEBI:18420"/>
    </cofactor>
    <cofactor evidence="5">
        <name>Co(2+)</name>
        <dbReference type="ChEBI" id="CHEBI:48828"/>
    </cofactor>
    <text evidence="3 5">Binds 2 divalent ions per subunit. The metal ions interact primarily with the substrate (By similarity). Can utilize magnesium, manganese or cobalt (in vitro) (By similarity).</text>
</comment>
<comment type="cofactor">
    <cofactor evidence="5">
        <name>K(+)</name>
        <dbReference type="ChEBI" id="CHEBI:29103"/>
    </cofactor>
    <text evidence="3">Binds 1 potassium ion per subunit. The potassium ion interacts primarily with the substrate (By similarity).</text>
</comment>
<comment type="pathway">
    <text evidence="5">Amino-acid biosynthesis; S-adenosyl-L-methionine biosynthesis; S-adenosyl-L-methionine from L-methionine: step 1/1.</text>
</comment>
<comment type="subunit">
    <text evidence="1">Homotetramer.</text>
</comment>
<comment type="subcellular location">
    <subcellularLocation>
        <location evidence="1">Cytoplasm</location>
    </subcellularLocation>
</comment>
<comment type="similarity">
    <text evidence="6">Belongs to the AdoMet synthase family.</text>
</comment>
<gene>
    <name type="primary">SAMS</name>
</gene>
<accession>Q5DNB1</accession>
<evidence type="ECO:0000250" key="1"/>
<evidence type="ECO:0000250" key="2">
    <source>
        <dbReference type="UniProtKB" id="P0A817"/>
    </source>
</evidence>
<evidence type="ECO:0000250" key="3">
    <source>
        <dbReference type="UniProtKB" id="P13444"/>
    </source>
</evidence>
<evidence type="ECO:0000250" key="4">
    <source>
        <dbReference type="UniProtKB" id="Q00266"/>
    </source>
</evidence>
<evidence type="ECO:0000250" key="5">
    <source>
        <dbReference type="UniProtKB" id="Q96551"/>
    </source>
</evidence>
<evidence type="ECO:0000305" key="6"/>
<protein>
    <recommendedName>
        <fullName>S-adenosylmethionine synthase</fullName>
        <shortName>AdoMet synthase</shortName>
        <ecNumber evidence="5">2.5.1.6</ecNumber>
    </recommendedName>
    <alternativeName>
        <fullName>Methionine adenosyltransferase</fullName>
        <shortName>MAT</shortName>
    </alternativeName>
</protein>
<name>METK_BRARP</name>
<organism>
    <name type="scientific">Brassica rapa subsp. pekinensis</name>
    <name type="common">Chinese cabbage</name>
    <name type="synonym">Brassica pekinensis</name>
    <dbReference type="NCBI Taxonomy" id="51351"/>
    <lineage>
        <taxon>Eukaryota</taxon>
        <taxon>Viridiplantae</taxon>
        <taxon>Streptophyta</taxon>
        <taxon>Embryophyta</taxon>
        <taxon>Tracheophyta</taxon>
        <taxon>Spermatophyta</taxon>
        <taxon>Magnoliopsida</taxon>
        <taxon>eudicotyledons</taxon>
        <taxon>Gunneridae</taxon>
        <taxon>Pentapetalae</taxon>
        <taxon>rosids</taxon>
        <taxon>malvids</taxon>
        <taxon>Brassicales</taxon>
        <taxon>Brassicaceae</taxon>
        <taxon>Brassiceae</taxon>
        <taxon>Brassica</taxon>
    </lineage>
</organism>
<dbReference type="EC" id="2.5.1.6" evidence="5"/>
<dbReference type="EMBL" id="AY567973">
    <property type="protein sequence ID" value="AAV80205.1"/>
    <property type="molecule type" value="mRNA"/>
</dbReference>
<dbReference type="SMR" id="Q5DNB1"/>
<dbReference type="FunCoup" id="Q5DNB1">
    <property type="interactions" value="2715"/>
</dbReference>
<dbReference type="STRING" id="51351.Q5DNB1"/>
<dbReference type="eggNOG" id="KOG1506">
    <property type="taxonomic scope" value="Eukaryota"/>
</dbReference>
<dbReference type="InParanoid" id="Q5DNB1"/>
<dbReference type="UniPathway" id="UPA00315">
    <property type="reaction ID" value="UER00080"/>
</dbReference>
<dbReference type="GO" id="GO:0005737">
    <property type="term" value="C:cytoplasm"/>
    <property type="evidence" value="ECO:0007669"/>
    <property type="project" value="UniProtKB-SubCell"/>
</dbReference>
<dbReference type="GO" id="GO:0005524">
    <property type="term" value="F:ATP binding"/>
    <property type="evidence" value="ECO:0007669"/>
    <property type="project" value="UniProtKB-KW"/>
</dbReference>
<dbReference type="GO" id="GO:0046872">
    <property type="term" value="F:metal ion binding"/>
    <property type="evidence" value="ECO:0007669"/>
    <property type="project" value="UniProtKB-KW"/>
</dbReference>
<dbReference type="GO" id="GO:0004478">
    <property type="term" value="F:methionine adenosyltransferase activity"/>
    <property type="evidence" value="ECO:0007669"/>
    <property type="project" value="UniProtKB-EC"/>
</dbReference>
<dbReference type="GO" id="GO:0006730">
    <property type="term" value="P:one-carbon metabolic process"/>
    <property type="evidence" value="ECO:0007669"/>
    <property type="project" value="UniProtKB-KW"/>
</dbReference>
<dbReference type="GO" id="GO:0006556">
    <property type="term" value="P:S-adenosylmethionine biosynthetic process"/>
    <property type="evidence" value="ECO:0007669"/>
    <property type="project" value="UniProtKB-UniPathway"/>
</dbReference>
<dbReference type="CDD" id="cd18079">
    <property type="entry name" value="S-AdoMet_synt"/>
    <property type="match status" value="1"/>
</dbReference>
<dbReference type="FunFam" id="3.30.300.10:FF:000003">
    <property type="entry name" value="S-adenosylmethionine synthase"/>
    <property type="match status" value="1"/>
</dbReference>
<dbReference type="FunFam" id="3.30.300.10:FF:000004">
    <property type="entry name" value="S-adenosylmethionine synthase"/>
    <property type="match status" value="1"/>
</dbReference>
<dbReference type="FunFam" id="3.30.300.10:FF:000011">
    <property type="entry name" value="S-adenosylmethionine synthase"/>
    <property type="match status" value="1"/>
</dbReference>
<dbReference type="FunFam" id="3.30.300.10:FF:000021">
    <property type="entry name" value="S-adenosylmethionine synthetase 1"/>
    <property type="match status" value="1"/>
</dbReference>
<dbReference type="Gene3D" id="3.30.300.10">
    <property type="match status" value="3"/>
</dbReference>
<dbReference type="HAMAP" id="MF_00086">
    <property type="entry name" value="S_AdoMet_synth1"/>
    <property type="match status" value="1"/>
</dbReference>
<dbReference type="InterPro" id="IPR022631">
    <property type="entry name" value="ADOMET_SYNTHASE_CS"/>
</dbReference>
<dbReference type="InterPro" id="IPR022630">
    <property type="entry name" value="S-AdoMet_synt_C"/>
</dbReference>
<dbReference type="InterPro" id="IPR022629">
    <property type="entry name" value="S-AdoMet_synt_central"/>
</dbReference>
<dbReference type="InterPro" id="IPR022628">
    <property type="entry name" value="S-AdoMet_synt_N"/>
</dbReference>
<dbReference type="InterPro" id="IPR002133">
    <property type="entry name" value="S-AdoMet_synthetase"/>
</dbReference>
<dbReference type="InterPro" id="IPR022636">
    <property type="entry name" value="S-AdoMet_synthetase_sfam"/>
</dbReference>
<dbReference type="NCBIfam" id="TIGR01034">
    <property type="entry name" value="metK"/>
    <property type="match status" value="1"/>
</dbReference>
<dbReference type="PANTHER" id="PTHR11964">
    <property type="entry name" value="S-ADENOSYLMETHIONINE SYNTHETASE"/>
    <property type="match status" value="1"/>
</dbReference>
<dbReference type="Pfam" id="PF02773">
    <property type="entry name" value="S-AdoMet_synt_C"/>
    <property type="match status" value="1"/>
</dbReference>
<dbReference type="Pfam" id="PF02772">
    <property type="entry name" value="S-AdoMet_synt_M"/>
    <property type="match status" value="1"/>
</dbReference>
<dbReference type="Pfam" id="PF00438">
    <property type="entry name" value="S-AdoMet_synt_N"/>
    <property type="match status" value="1"/>
</dbReference>
<dbReference type="PIRSF" id="PIRSF000497">
    <property type="entry name" value="MAT"/>
    <property type="match status" value="1"/>
</dbReference>
<dbReference type="SUPFAM" id="SSF55973">
    <property type="entry name" value="S-adenosylmethionine synthetase"/>
    <property type="match status" value="3"/>
</dbReference>
<dbReference type="PROSITE" id="PS00376">
    <property type="entry name" value="ADOMET_SYNTHASE_1"/>
    <property type="match status" value="1"/>
</dbReference>
<dbReference type="PROSITE" id="PS00377">
    <property type="entry name" value="ADOMET_SYNTHASE_2"/>
    <property type="match status" value="1"/>
</dbReference>
<keyword id="KW-0067">ATP-binding</keyword>
<keyword id="KW-0170">Cobalt</keyword>
<keyword id="KW-0963">Cytoplasm</keyword>
<keyword id="KW-0460">Magnesium</keyword>
<keyword id="KW-0479">Metal-binding</keyword>
<keyword id="KW-0547">Nucleotide-binding</keyword>
<keyword id="KW-0554">One-carbon metabolism</keyword>
<keyword id="KW-0630">Potassium</keyword>
<keyword id="KW-0808">Transferase</keyword>